<feature type="chain" id="PRO_1000197379" description="Undecaprenyl-diphosphatase">
    <location>
        <begin position="1"/>
        <end position="279"/>
    </location>
</feature>
<feature type="transmembrane region" description="Helical" evidence="1">
    <location>
        <begin position="17"/>
        <end position="37"/>
    </location>
</feature>
<feature type="transmembrane region" description="Helical" evidence="1">
    <location>
        <begin position="46"/>
        <end position="66"/>
    </location>
</feature>
<feature type="transmembrane region" description="Helical" evidence="1">
    <location>
        <begin position="92"/>
        <end position="112"/>
    </location>
</feature>
<feature type="transmembrane region" description="Helical" evidence="1">
    <location>
        <begin position="123"/>
        <end position="143"/>
    </location>
</feature>
<feature type="transmembrane region" description="Helical" evidence="1">
    <location>
        <begin position="156"/>
        <end position="176"/>
    </location>
</feature>
<feature type="transmembrane region" description="Helical" evidence="1">
    <location>
        <begin position="197"/>
        <end position="217"/>
    </location>
</feature>
<feature type="transmembrane region" description="Helical" evidence="1">
    <location>
        <begin position="226"/>
        <end position="246"/>
    </location>
</feature>
<feature type="transmembrane region" description="Helical" evidence="1">
    <location>
        <begin position="257"/>
        <end position="277"/>
    </location>
</feature>
<sequence length="279" mass="31616">MDNTLNAFLRGIIEAATEFLPVSSTGHLFLFSYFFPFQNLSVPHEAFEDLFDIFIQTGAILSVVVLYYKTLWSHLVEAVRFGLGKSTDRSGFQFYLNLIVGILPILILGFLLKSQLDQIKMRSDLLLILGMSWFVGGIIMVFVEKRHLDESSGKTIGFKESIIVGFLQCFALIPGVSRSAATIISARTMGVSKKDSAEFSFFLAIPVLTLAGIYKLYKHRQILNSETIGLLLFGSIISFIICYFIIRLFMAFIRRRSFISFGVYRILLGLLVILYFVRY</sequence>
<organism>
    <name type="scientific">Leptospira biflexa serovar Patoc (strain Patoc 1 / Ames)</name>
    <dbReference type="NCBI Taxonomy" id="355278"/>
    <lineage>
        <taxon>Bacteria</taxon>
        <taxon>Pseudomonadati</taxon>
        <taxon>Spirochaetota</taxon>
        <taxon>Spirochaetia</taxon>
        <taxon>Leptospirales</taxon>
        <taxon>Leptospiraceae</taxon>
        <taxon>Leptospira</taxon>
    </lineage>
</organism>
<gene>
    <name evidence="1" type="primary">uppP</name>
    <name type="ordered locus">LBF_1768</name>
</gene>
<dbReference type="EC" id="3.6.1.27" evidence="1"/>
<dbReference type="EMBL" id="CP000777">
    <property type="protein sequence ID" value="ABZ94275.1"/>
    <property type="molecule type" value="Genomic_DNA"/>
</dbReference>
<dbReference type="RefSeq" id="WP_012388805.1">
    <property type="nucleotide sequence ID" value="NC_010842.1"/>
</dbReference>
<dbReference type="SMR" id="B0S9E8"/>
<dbReference type="KEGG" id="lbf:LBF_1768"/>
<dbReference type="HOGENOM" id="CLU_060296_2_0_12"/>
<dbReference type="GO" id="GO:0005886">
    <property type="term" value="C:plasma membrane"/>
    <property type="evidence" value="ECO:0007669"/>
    <property type="project" value="UniProtKB-SubCell"/>
</dbReference>
<dbReference type="GO" id="GO:0050380">
    <property type="term" value="F:undecaprenyl-diphosphatase activity"/>
    <property type="evidence" value="ECO:0007669"/>
    <property type="project" value="UniProtKB-UniRule"/>
</dbReference>
<dbReference type="GO" id="GO:0071555">
    <property type="term" value="P:cell wall organization"/>
    <property type="evidence" value="ECO:0007669"/>
    <property type="project" value="UniProtKB-KW"/>
</dbReference>
<dbReference type="GO" id="GO:0009252">
    <property type="term" value="P:peptidoglycan biosynthetic process"/>
    <property type="evidence" value="ECO:0007669"/>
    <property type="project" value="UniProtKB-KW"/>
</dbReference>
<dbReference type="GO" id="GO:0008360">
    <property type="term" value="P:regulation of cell shape"/>
    <property type="evidence" value="ECO:0007669"/>
    <property type="project" value="UniProtKB-KW"/>
</dbReference>
<dbReference type="GO" id="GO:0046677">
    <property type="term" value="P:response to antibiotic"/>
    <property type="evidence" value="ECO:0007669"/>
    <property type="project" value="UniProtKB-UniRule"/>
</dbReference>
<dbReference type="HAMAP" id="MF_01006">
    <property type="entry name" value="Undec_diphosphatase"/>
    <property type="match status" value="1"/>
</dbReference>
<dbReference type="InterPro" id="IPR003824">
    <property type="entry name" value="UppP"/>
</dbReference>
<dbReference type="PANTHER" id="PTHR30622">
    <property type="entry name" value="UNDECAPRENYL-DIPHOSPHATASE"/>
    <property type="match status" value="1"/>
</dbReference>
<dbReference type="PANTHER" id="PTHR30622:SF3">
    <property type="entry name" value="UNDECAPRENYL-DIPHOSPHATASE"/>
    <property type="match status" value="1"/>
</dbReference>
<dbReference type="Pfam" id="PF02673">
    <property type="entry name" value="BacA"/>
    <property type="match status" value="1"/>
</dbReference>
<accession>B0S9E8</accession>
<name>UPPP_LEPBA</name>
<proteinExistence type="inferred from homology"/>
<keyword id="KW-0046">Antibiotic resistance</keyword>
<keyword id="KW-0997">Cell inner membrane</keyword>
<keyword id="KW-1003">Cell membrane</keyword>
<keyword id="KW-0133">Cell shape</keyword>
<keyword id="KW-0961">Cell wall biogenesis/degradation</keyword>
<keyword id="KW-0378">Hydrolase</keyword>
<keyword id="KW-0472">Membrane</keyword>
<keyword id="KW-0573">Peptidoglycan synthesis</keyword>
<keyword id="KW-0812">Transmembrane</keyword>
<keyword id="KW-1133">Transmembrane helix</keyword>
<protein>
    <recommendedName>
        <fullName evidence="1">Undecaprenyl-diphosphatase</fullName>
        <ecNumber evidence="1">3.6.1.27</ecNumber>
    </recommendedName>
    <alternativeName>
        <fullName evidence="1">Bacitracin resistance protein</fullName>
    </alternativeName>
    <alternativeName>
        <fullName evidence="1">Undecaprenyl pyrophosphate phosphatase</fullName>
    </alternativeName>
</protein>
<evidence type="ECO:0000255" key="1">
    <source>
        <dbReference type="HAMAP-Rule" id="MF_01006"/>
    </source>
</evidence>
<comment type="function">
    <text evidence="1">Catalyzes the dephosphorylation of undecaprenyl diphosphate (UPP). Confers resistance to bacitracin.</text>
</comment>
<comment type="catalytic activity">
    <reaction evidence="1">
        <text>di-trans,octa-cis-undecaprenyl diphosphate + H2O = di-trans,octa-cis-undecaprenyl phosphate + phosphate + H(+)</text>
        <dbReference type="Rhea" id="RHEA:28094"/>
        <dbReference type="ChEBI" id="CHEBI:15377"/>
        <dbReference type="ChEBI" id="CHEBI:15378"/>
        <dbReference type="ChEBI" id="CHEBI:43474"/>
        <dbReference type="ChEBI" id="CHEBI:58405"/>
        <dbReference type="ChEBI" id="CHEBI:60392"/>
        <dbReference type="EC" id="3.6.1.27"/>
    </reaction>
</comment>
<comment type="subcellular location">
    <subcellularLocation>
        <location evidence="1">Cell inner membrane</location>
        <topology evidence="1">Multi-pass membrane protein</topology>
    </subcellularLocation>
</comment>
<comment type="miscellaneous">
    <text>Bacitracin is thought to be involved in the inhibition of peptidoglycan synthesis by sequestering undecaprenyl diphosphate, thereby reducing the pool of lipid carrier available.</text>
</comment>
<comment type="similarity">
    <text evidence="1">Belongs to the UppP family.</text>
</comment>
<reference key="1">
    <citation type="journal article" date="2008" name="PLoS ONE">
        <title>Genome sequence of the saprophyte Leptospira biflexa provides insights into the evolution of Leptospira and the pathogenesis of leptospirosis.</title>
        <authorList>
            <person name="Picardeau M."/>
            <person name="Bulach D.M."/>
            <person name="Bouchier C."/>
            <person name="Zuerner R.L."/>
            <person name="Zidane N."/>
            <person name="Wilson P.J."/>
            <person name="Creno S."/>
            <person name="Kuczek E.S."/>
            <person name="Bommezzadri S."/>
            <person name="Davis J.C."/>
            <person name="McGrath A."/>
            <person name="Johnson M.J."/>
            <person name="Boursaux-Eude C."/>
            <person name="Seemann T."/>
            <person name="Rouy Z."/>
            <person name="Coppel R.L."/>
            <person name="Rood J.I."/>
            <person name="Lajus A."/>
            <person name="Davies J.K."/>
            <person name="Medigue C."/>
            <person name="Adler B."/>
        </authorList>
    </citation>
    <scope>NUCLEOTIDE SEQUENCE [LARGE SCALE GENOMIC DNA]</scope>
    <source>
        <strain>Patoc 1 / Ames</strain>
    </source>
</reference>